<organism>
    <name type="scientific">Mus musculus</name>
    <name type="common">Mouse</name>
    <dbReference type="NCBI Taxonomy" id="10090"/>
    <lineage>
        <taxon>Eukaryota</taxon>
        <taxon>Metazoa</taxon>
        <taxon>Chordata</taxon>
        <taxon>Craniata</taxon>
        <taxon>Vertebrata</taxon>
        <taxon>Euteleostomi</taxon>
        <taxon>Mammalia</taxon>
        <taxon>Eutheria</taxon>
        <taxon>Euarchontoglires</taxon>
        <taxon>Glires</taxon>
        <taxon>Rodentia</taxon>
        <taxon>Myomorpha</taxon>
        <taxon>Muroidea</taxon>
        <taxon>Muridae</taxon>
        <taxon>Murinae</taxon>
        <taxon>Mus</taxon>
        <taxon>Mus</taxon>
    </lineage>
</organism>
<gene>
    <name type="primary">Wdr11</name>
    <name type="synonym">Brwd2</name>
    <name type="synonym">Kiaa1351</name>
</gene>
<keyword id="KW-0966">Cell projection</keyword>
<keyword id="KW-0963">Cytoplasm</keyword>
<keyword id="KW-0968">Cytoplasmic vesicle</keyword>
<keyword id="KW-0206">Cytoskeleton</keyword>
<keyword id="KW-0333">Golgi apparatus</keyword>
<keyword id="KW-0539">Nucleus</keyword>
<keyword id="KW-0597">Phosphoprotein</keyword>
<keyword id="KW-1185">Reference proteome</keyword>
<keyword id="KW-0677">Repeat</keyword>
<keyword id="KW-0853">WD repeat</keyword>
<reference key="1">
    <citation type="journal article" date="2004" name="Genome Res.">
        <title>The status, quality, and expansion of the NIH full-length cDNA project: the Mammalian Gene Collection (MGC).</title>
        <authorList>
            <consortium name="The MGC Project Team"/>
        </authorList>
    </citation>
    <scope>NUCLEOTIDE SEQUENCE [LARGE SCALE MRNA]</scope>
    <source>
        <strain>FVB/N</strain>
        <tissue>Mammary tumor</tissue>
    </source>
</reference>
<reference key="2">
    <citation type="journal article" date="2005" name="Science">
        <title>The transcriptional landscape of the mammalian genome.</title>
        <authorList>
            <person name="Carninci P."/>
            <person name="Kasukawa T."/>
            <person name="Katayama S."/>
            <person name="Gough J."/>
            <person name="Frith M.C."/>
            <person name="Maeda N."/>
            <person name="Oyama R."/>
            <person name="Ravasi T."/>
            <person name="Lenhard B."/>
            <person name="Wells C."/>
            <person name="Kodzius R."/>
            <person name="Shimokawa K."/>
            <person name="Bajic V.B."/>
            <person name="Brenner S.E."/>
            <person name="Batalov S."/>
            <person name="Forrest A.R."/>
            <person name="Zavolan M."/>
            <person name="Davis M.J."/>
            <person name="Wilming L.G."/>
            <person name="Aidinis V."/>
            <person name="Allen J.E."/>
            <person name="Ambesi-Impiombato A."/>
            <person name="Apweiler R."/>
            <person name="Aturaliya R.N."/>
            <person name="Bailey T.L."/>
            <person name="Bansal M."/>
            <person name="Baxter L."/>
            <person name="Beisel K.W."/>
            <person name="Bersano T."/>
            <person name="Bono H."/>
            <person name="Chalk A.M."/>
            <person name="Chiu K.P."/>
            <person name="Choudhary V."/>
            <person name="Christoffels A."/>
            <person name="Clutterbuck D.R."/>
            <person name="Crowe M.L."/>
            <person name="Dalla E."/>
            <person name="Dalrymple B.P."/>
            <person name="de Bono B."/>
            <person name="Della Gatta G."/>
            <person name="di Bernardo D."/>
            <person name="Down T."/>
            <person name="Engstrom P."/>
            <person name="Fagiolini M."/>
            <person name="Faulkner G."/>
            <person name="Fletcher C.F."/>
            <person name="Fukushima T."/>
            <person name="Furuno M."/>
            <person name="Futaki S."/>
            <person name="Gariboldi M."/>
            <person name="Georgii-Hemming P."/>
            <person name="Gingeras T.R."/>
            <person name="Gojobori T."/>
            <person name="Green R.E."/>
            <person name="Gustincich S."/>
            <person name="Harbers M."/>
            <person name="Hayashi Y."/>
            <person name="Hensch T.K."/>
            <person name="Hirokawa N."/>
            <person name="Hill D."/>
            <person name="Huminiecki L."/>
            <person name="Iacono M."/>
            <person name="Ikeo K."/>
            <person name="Iwama A."/>
            <person name="Ishikawa T."/>
            <person name="Jakt M."/>
            <person name="Kanapin A."/>
            <person name="Katoh M."/>
            <person name="Kawasawa Y."/>
            <person name="Kelso J."/>
            <person name="Kitamura H."/>
            <person name="Kitano H."/>
            <person name="Kollias G."/>
            <person name="Krishnan S.P."/>
            <person name="Kruger A."/>
            <person name="Kummerfeld S.K."/>
            <person name="Kurochkin I.V."/>
            <person name="Lareau L.F."/>
            <person name="Lazarevic D."/>
            <person name="Lipovich L."/>
            <person name="Liu J."/>
            <person name="Liuni S."/>
            <person name="McWilliam S."/>
            <person name="Madan Babu M."/>
            <person name="Madera M."/>
            <person name="Marchionni L."/>
            <person name="Matsuda H."/>
            <person name="Matsuzawa S."/>
            <person name="Miki H."/>
            <person name="Mignone F."/>
            <person name="Miyake S."/>
            <person name="Morris K."/>
            <person name="Mottagui-Tabar S."/>
            <person name="Mulder N."/>
            <person name="Nakano N."/>
            <person name="Nakauchi H."/>
            <person name="Ng P."/>
            <person name="Nilsson R."/>
            <person name="Nishiguchi S."/>
            <person name="Nishikawa S."/>
            <person name="Nori F."/>
            <person name="Ohara O."/>
            <person name="Okazaki Y."/>
            <person name="Orlando V."/>
            <person name="Pang K.C."/>
            <person name="Pavan W.J."/>
            <person name="Pavesi G."/>
            <person name="Pesole G."/>
            <person name="Petrovsky N."/>
            <person name="Piazza S."/>
            <person name="Reed J."/>
            <person name="Reid J.F."/>
            <person name="Ring B.Z."/>
            <person name="Ringwald M."/>
            <person name="Rost B."/>
            <person name="Ruan Y."/>
            <person name="Salzberg S.L."/>
            <person name="Sandelin A."/>
            <person name="Schneider C."/>
            <person name="Schoenbach C."/>
            <person name="Sekiguchi K."/>
            <person name="Semple C.A."/>
            <person name="Seno S."/>
            <person name="Sessa L."/>
            <person name="Sheng Y."/>
            <person name="Shibata Y."/>
            <person name="Shimada H."/>
            <person name="Shimada K."/>
            <person name="Silva D."/>
            <person name="Sinclair B."/>
            <person name="Sperling S."/>
            <person name="Stupka E."/>
            <person name="Sugiura K."/>
            <person name="Sultana R."/>
            <person name="Takenaka Y."/>
            <person name="Taki K."/>
            <person name="Tammoja K."/>
            <person name="Tan S.L."/>
            <person name="Tang S."/>
            <person name="Taylor M.S."/>
            <person name="Tegner J."/>
            <person name="Teichmann S.A."/>
            <person name="Ueda H.R."/>
            <person name="van Nimwegen E."/>
            <person name="Verardo R."/>
            <person name="Wei C.L."/>
            <person name="Yagi K."/>
            <person name="Yamanishi H."/>
            <person name="Zabarovsky E."/>
            <person name="Zhu S."/>
            <person name="Zimmer A."/>
            <person name="Hide W."/>
            <person name="Bult C."/>
            <person name="Grimmond S.M."/>
            <person name="Teasdale R.D."/>
            <person name="Liu E.T."/>
            <person name="Brusic V."/>
            <person name="Quackenbush J."/>
            <person name="Wahlestedt C."/>
            <person name="Mattick J.S."/>
            <person name="Hume D.A."/>
            <person name="Kai C."/>
            <person name="Sasaki D."/>
            <person name="Tomaru Y."/>
            <person name="Fukuda S."/>
            <person name="Kanamori-Katayama M."/>
            <person name="Suzuki M."/>
            <person name="Aoki J."/>
            <person name="Arakawa T."/>
            <person name="Iida J."/>
            <person name="Imamura K."/>
            <person name="Itoh M."/>
            <person name="Kato T."/>
            <person name="Kawaji H."/>
            <person name="Kawagashira N."/>
            <person name="Kawashima T."/>
            <person name="Kojima M."/>
            <person name="Kondo S."/>
            <person name="Konno H."/>
            <person name="Nakano K."/>
            <person name="Ninomiya N."/>
            <person name="Nishio T."/>
            <person name="Okada M."/>
            <person name="Plessy C."/>
            <person name="Shibata K."/>
            <person name="Shiraki T."/>
            <person name="Suzuki S."/>
            <person name="Tagami M."/>
            <person name="Waki K."/>
            <person name="Watahiki A."/>
            <person name="Okamura-Oho Y."/>
            <person name="Suzuki H."/>
            <person name="Kawai J."/>
            <person name="Hayashizaki Y."/>
        </authorList>
    </citation>
    <scope>NUCLEOTIDE SEQUENCE [LARGE SCALE MRNA] OF 260-877</scope>
    <source>
        <strain>C57BL/6J</strain>
        <tissue>Cerebellum</tissue>
    </source>
</reference>
<reference key="3">
    <citation type="journal article" date="2004" name="DNA Res.">
        <title>Prediction of the coding sequences of mouse homologues of KIAA gene: IV. The complete nucleotide sequences of 500 mouse KIAA-homologous cDNAs identified by screening of terminal sequences of cDNA clones randomly sampled from size-fractionated libraries.</title>
        <authorList>
            <person name="Okazaki N."/>
            <person name="Kikuno R."/>
            <person name="Ohara R."/>
            <person name="Inamoto S."/>
            <person name="Koseki H."/>
            <person name="Hiraoka S."/>
            <person name="Saga Y."/>
            <person name="Seino S."/>
            <person name="Nishimura M."/>
            <person name="Kaisho T."/>
            <person name="Hoshino K."/>
            <person name="Kitamura H."/>
            <person name="Nagase T."/>
            <person name="Ohara O."/>
            <person name="Koga H."/>
        </authorList>
    </citation>
    <scope>NUCLEOTIDE SEQUENCE [LARGE SCALE MRNA] OF 766-1223</scope>
    <source>
        <tissue>Brain</tissue>
    </source>
</reference>
<reference key="4">
    <citation type="journal article" date="2010" name="Am. J. Hum. Genet.">
        <title>WDR11, a WD protein that interacts with transcription factor EMX1, is mutated in idiopathic hypogonadotropic hypogonadism and Kallmann syndrome.</title>
        <authorList>
            <person name="Kim H.G."/>
            <person name="Ahn J.W."/>
            <person name="Kurth I."/>
            <person name="Ullmann R."/>
            <person name="Kim H.T."/>
            <person name="Kulharya A."/>
            <person name="Ha K.S."/>
            <person name="Itokawa Y."/>
            <person name="Meliciani I."/>
            <person name="Wenzel W."/>
            <person name="Lee D."/>
            <person name="Rosenberger G."/>
            <person name="Ozata M."/>
            <person name="Bick D.P."/>
            <person name="Sherins R.J."/>
            <person name="Nagase T."/>
            <person name="Tekin M."/>
            <person name="Kim S.H."/>
            <person name="Kim C.H."/>
            <person name="Ropers H.H."/>
            <person name="Gusella J.F."/>
            <person name="Kalscheuer V."/>
            <person name="Choi C.Y."/>
            <person name="Layman L.C."/>
        </authorList>
    </citation>
    <scope>TISSUE SPECIFICITY</scope>
    <scope>DEVELOPMENTAL STAGE</scope>
</reference>
<reference key="5">
    <citation type="journal article" date="2010" name="Cell">
        <title>A tissue-specific atlas of mouse protein phosphorylation and expression.</title>
        <authorList>
            <person name="Huttlin E.L."/>
            <person name="Jedrychowski M.P."/>
            <person name="Elias J.E."/>
            <person name="Goswami T."/>
            <person name="Rad R."/>
            <person name="Beausoleil S.A."/>
            <person name="Villen J."/>
            <person name="Haas W."/>
            <person name="Sowa M.E."/>
            <person name="Gygi S.P."/>
        </authorList>
    </citation>
    <scope>PHOSPHORYLATION [LARGE SCALE ANALYSIS] AT SER-401 AND SER-405</scope>
    <scope>IDENTIFICATION BY MASS SPECTROMETRY [LARGE SCALE ANALYSIS]</scope>
    <source>
        <tissue>Brain</tissue>
        <tissue>Brown adipose tissue</tissue>
        <tissue>Kidney</tissue>
        <tissue>Liver</tissue>
        <tissue>Lung</tissue>
        <tissue>Pancreas</tissue>
        <tissue>Spleen</tissue>
        <tissue>Testis</tissue>
    </source>
</reference>
<reference key="6">
    <citation type="journal article" date="2017" name="Nat. Cell Biol.">
        <title>TBC1D23 is a bridging factor for endosomal vesicle capture by golgins at the trans-Golgi.</title>
        <authorList>
            <person name="Shin J.J.H."/>
            <person name="Gillingham A.K."/>
            <person name="Begum F."/>
            <person name="Chadwick J."/>
            <person name="Munro S."/>
        </authorList>
    </citation>
    <scope>INTERACTION WITH TBC1D23</scope>
</reference>
<reference key="7">
    <citation type="journal article" date="2018" name="EMBO Rep.">
        <title>WDR11-mediated Hedgehog signalling defects underlie a new ciliopathy related to Kallmann syndrome.</title>
        <authorList>
            <person name="Kim Y.J."/>
            <person name="Osborn D.P."/>
            <person name="Lee J.Y."/>
            <person name="Araki M."/>
            <person name="Araki K."/>
            <person name="Mohun T."/>
            <person name="Kaensaekoski J."/>
            <person name="Brandstack N."/>
            <person name="Kim H.T."/>
            <person name="Miralles F."/>
            <person name="Kim C.H."/>
            <person name="Brown N.A."/>
            <person name="Kim H.G."/>
            <person name="Martinez-Barbera J.P."/>
            <person name="Ataliotis P."/>
            <person name="Raivio T."/>
            <person name="Layman L.C."/>
            <person name="Kim S.H."/>
        </authorList>
    </citation>
    <scope>FUNCTION</scope>
    <scope>DISRUPTION PHENOTYPE</scope>
    <scope>TISSUE SPECIFICITY</scope>
    <scope>DEVELOPMENTAL STAGE</scope>
    <scope>SUBCELLULAR LOCATION</scope>
    <scope>INTERACTION WITH EMX1 AND GLI3</scope>
</reference>
<sequence length="1223" mass="135937">MLPYTVNFKVSARTLTGALNAHNKAAVDWGWQGLIAYGCHSLVVVIDSNTAQTLQVLEKHKADIVKVRWARENYHHNIGSPYCLRLASADVTGKIIVWDVAAGVAQCEIQEHVKPIQDVQWLWNQDASRDLLLAIHPPNYIVLWNADTGTKLWKKSYADNILSFSFDPFDPSHLTLLTSEGIVFISDFSPSKPPSGPGKKVYISSPHSSPAHNKLAAATGAKKALNKVKILITQEKPSADFVALNDCLQLAYLPSKRNHMLLLYPREILILDLEVNQTVGVIAIERTGVPFLQVIPCSQRDGLFCLHENGCITLRVRRSYNSICTTSNDEPDLDPVQELTYDLRSQCDAIRVTKTVRPFSMVCCPVNENAAALIVSDGRVMIWELKSAVCSRNARNSSGVSPLYSPVSFCGIPGGVLQNKLPDLSLDNMIGQSAIAGEEHPKGSILQEVHLKFLLTGLLSGLPSPQFAIRMCPPLTTKNIKTYQPLLAVGTSNGSVLVYHLTSGLLHKELSVHSCEVKGIEWTSLTSFLSFAASTPNNMGLVRNELQLVDLPTGRSTAFRGDRGNDESPIEMIKVSHLKQYLAVVFKDKPLELWDIRTCTLLREMSKSFPAITALEWSPSHNLKSLRKKQLATREAMARQTVVSDAELGAVESSVISLLQEAESKAELSQNISAREHFVFTDNDGQVYHLTVEGNSVKDSARIPPDGSMGSITCIAWKGDTLVLGDMDGNLNFWDLKARVSRGIPTHRSWVRKIRFAPGKGNQKLIAMYNDGAEVWDTKEVQMVSSLRSGRNVTFRILDVDWCTSDKVILASDDGCIRVLEMSMKSTCFRMDEQELVEPVWCPYLLVPRAALALKAFLLHQPWNGRYSLDISHIDYPENEEIKTLLQEQLHALSNDIKKLLLDPDFSLLQRCLLVSRLYGDESELHFWTVAAHYLHSLSQAKSGDTVVTKEGAPKDRLSNPLDICYDVLCENTYFQKFQLERVNLQEVKRSTYDHTRKCTDQLLLLGQTDRAVQLLLETSADNQHYYCDSLKACLVTTVTSSGPSQSTIKLVATNMIANGKLAEGVQLLCLIDKAADACRYLQTYGEWNRAAWLAKVRLNSEECADVLKRWVDHLCSPQVNQKSKALLVLLSLGCFVSVAETLHSMRYFDRAALFVEACLKYGAFEVSEDTEKLIAAIYADYARSLKSLGFRQGAVRFASKAGAAGRDLLNELGSTKEELTES</sequence>
<feature type="chain" id="PRO_0000309846" description="WD repeat-containing protein 11">
    <location>
        <begin position="1"/>
        <end position="1223"/>
    </location>
</feature>
<feature type="repeat" description="WD 1">
    <location>
        <begin position="59"/>
        <end position="108"/>
    </location>
</feature>
<feature type="repeat" description="WD 2">
    <location>
        <begin position="111"/>
        <end position="154"/>
    </location>
</feature>
<feature type="repeat" description="WD 3">
    <location>
        <begin position="354"/>
        <end position="393"/>
    </location>
</feature>
<feature type="repeat" description="WD 4">
    <location>
        <begin position="470"/>
        <end position="509"/>
    </location>
</feature>
<feature type="repeat" description="WD 5">
    <location>
        <begin position="565"/>
        <end position="604"/>
    </location>
</feature>
<feature type="repeat" description="WD 6">
    <location>
        <begin position="707"/>
        <end position="744"/>
    </location>
</feature>
<feature type="repeat" description="WD 7">
    <location>
        <begin position="746"/>
        <end position="786"/>
    </location>
</feature>
<feature type="repeat" description="WD 8">
    <location>
        <begin position="792"/>
        <end position="830"/>
    </location>
</feature>
<feature type="repeat" description="WD 9">
    <location>
        <begin position="892"/>
        <end position="939"/>
    </location>
</feature>
<feature type="modified residue" description="Phosphoserine" evidence="1">
    <location>
        <position position="205"/>
    </location>
</feature>
<feature type="modified residue" description="Phosphoserine" evidence="1">
    <location>
        <position position="209"/>
    </location>
</feature>
<feature type="modified residue" description="Phosphoserine" evidence="6">
    <location>
        <position position="401"/>
    </location>
</feature>
<feature type="modified residue" description="Phosphoserine" evidence="6">
    <location>
        <position position="405"/>
    </location>
</feature>
<feature type="sequence conflict" description="In Ref. 2; BAC31449." evidence="5" ref="2">
    <original>T</original>
    <variation>M</variation>
    <location>
        <position position="482"/>
    </location>
</feature>
<feature type="sequence conflict" description="In Ref. 3; BAD32433." evidence="5" ref="3">
    <original>IAMYNDGAEVWDTKE</original>
    <variation>SRMVKDFIFCQSFLQ</variation>
    <location>
        <begin position="766"/>
        <end position="780"/>
    </location>
</feature>
<name>WDR11_MOUSE</name>
<comment type="function">
    <text evidence="1 4">Involved in the Hedgehog (Hh) signaling pathway, is essential for normal ciliogenesis (PubMed:29263200). Regulates the proteolytic processing of GLI3 and cooperates with the transcription factor EMX1 in the induction of downstream Hh pathway gene expression and gonadotropin-releasing hormone production (PubMed:29263200). WDR11 complex facilitates the tethering of Adaptor protein-1 complex (AP-1)-derived vesicles. WDR11 complex acts together with TBC1D23 to facilitate the golgin-mediated capture of vesicles generated using AP-1 (By similarity).</text>
</comment>
<comment type="subunit">
    <text evidence="1 3 4">Component of the complex WDR11 composed of C17orf75, FAM91A1 and WDR11; FAM91A1 and WDR11 are required for proper location of the complex (By similarity). Interacts with GLI3; the interaction associateS EMX1 with GLI3 (PubMed:29263200). Interacts with TBC1D23; this interaction may be indirect and recruits TBC1D23 to AP-1-derived vesicles (PubMed:29084197). Interacts (via the N-terminal and the central portion of the protein) with EMX1 (PubMed:29263200).</text>
</comment>
<comment type="subcellular location">
    <subcellularLocation>
        <location evidence="4">Cytoplasm</location>
        <location evidence="4">Cytoskeleton</location>
        <location evidence="4">Cilium basal body</location>
    </subcellularLocation>
    <subcellularLocation>
        <location evidence="4">Cytoplasm</location>
    </subcellularLocation>
    <subcellularLocation>
        <location evidence="1">Nucleus</location>
    </subcellularLocation>
    <subcellularLocation>
        <location evidence="4">Cytoplasm</location>
        <location evidence="4">Cytoskeleton</location>
        <location evidence="4">Cilium axoneme</location>
    </subcellularLocation>
    <subcellularLocation>
        <location evidence="1">Cytoplasmic vesicle</location>
    </subcellularLocation>
    <subcellularLocation>
        <location evidence="1">Golgi apparatus</location>
        <location evidence="1">trans-Golgi network</location>
    </subcellularLocation>
    <text evidence="1">Shuttles from the cilium to the nucleus in response to Hh signaling. Might be shuttling between the nucleus and the cytoplasm.</text>
</comment>
<comment type="tissue specificity">
    <text evidence="2 4">Broadly expressed in various organs including brain, eye,ear, lung, heart, kideny and gonads (PubMed:29263200). Cerebral cortex. The entire developing central nervous system, except for the spinal cord, reveals expression. Expressed in the neuroepithelium, including the diencephalic region that gives rise to hypothalamic neurons. In the adult brain, intense expression is restricted to the olfactory bulb, the olfaction-related piriform cortex, the granule cell layer of the cerebellum, and neurons of the hippocampal formation. The brain demonstrated expression scattered throughout the hypothalamus, sometimes in clusters of neurons (PubMed:20887964).</text>
</comment>
<comment type="developmental stage">
    <text evidence="2 4">Expressed in embryos from 10.5. to 14.5 dpc (PubMed:20887964, PubMed:29263200). In 10.5-12.5 dpc embryos, detected in the vesicles of the heart, branchial arches, mesonephric duct, head mesenchyme, developing eye and forebrain (PubMed:29263200). At 12.5 and 14.5 dpc, high levels of expression are particularly noteworthy in the developing cortex and the olfactory bulb (PubMed:20887964, PubMed:29263200).</text>
</comment>
<comment type="disruption phenotype">
    <text evidence="4">Mutants show retardation of growth and development with mid-gestation embryonic lethality, delayed puberty, reproductive dysfunctions and obesity. The rare mutant survivors through adulthood exhibit abnormal digit separation and syndactyly, as well as shortened limbs and hypoplastic skeletons with reduced or absent bone mineralization. Their head show a diminutive and curved nasal midline and a small lower jaw with microcephaly, closely spaced eyes or single/absent eyes. They have hypothalamic gonadotropin-releasing hormone (GnRH) deficiency and pituitary dysgenesis. In some cases, they exhibit exencephaly. At 12.5 dpc, they also have heart defects with a double-outlet right ventricle, ventricular septal defects and sometimes thorcic skeletal defect and lung airway abnormalities (PubMed:29263200). Mutant cells show defective ciliogenesis with a significant reduction in the length of the ciliary axoneme and the frequency of ciliated cells (PubMed:29263200).</text>
</comment>
<accession>Q8K1X1</accession>
<accession>Q69ZL3</accession>
<accession>Q8C937</accession>
<proteinExistence type="evidence at protein level"/>
<dbReference type="EMBL" id="BC037177">
    <property type="protein sequence ID" value="AAH37177.1"/>
    <property type="molecule type" value="mRNA"/>
</dbReference>
<dbReference type="EMBL" id="AK043051">
    <property type="protein sequence ID" value="BAC31449.2"/>
    <property type="molecule type" value="mRNA"/>
</dbReference>
<dbReference type="EMBL" id="AK173155">
    <property type="protein sequence ID" value="BAD32433.1"/>
    <property type="molecule type" value="mRNA"/>
</dbReference>
<dbReference type="CCDS" id="CCDS40155.1"/>
<dbReference type="RefSeq" id="NP_758459.2">
    <property type="nucleotide sequence ID" value="NM_172255.3"/>
</dbReference>
<dbReference type="SMR" id="Q8K1X1"/>
<dbReference type="BioGRID" id="228899">
    <property type="interactions" value="21"/>
</dbReference>
<dbReference type="FunCoup" id="Q8K1X1">
    <property type="interactions" value="2821"/>
</dbReference>
<dbReference type="IntAct" id="Q8K1X1">
    <property type="interactions" value="2"/>
</dbReference>
<dbReference type="MINT" id="Q8K1X1"/>
<dbReference type="STRING" id="10090.ENSMUSP00000081567"/>
<dbReference type="iPTMnet" id="Q8K1X1"/>
<dbReference type="PhosphoSitePlus" id="Q8K1X1"/>
<dbReference type="SwissPalm" id="Q8K1X1"/>
<dbReference type="jPOST" id="Q8K1X1"/>
<dbReference type="PaxDb" id="10090-ENSMUSP00000081567"/>
<dbReference type="ProteomicsDB" id="299968"/>
<dbReference type="Pumba" id="Q8K1X1"/>
<dbReference type="DNASU" id="207425"/>
<dbReference type="GeneID" id="207425"/>
<dbReference type="KEGG" id="mmu:207425"/>
<dbReference type="AGR" id="MGI:1920230"/>
<dbReference type="CTD" id="55717"/>
<dbReference type="MGI" id="MGI:1920230">
    <property type="gene designation" value="Wdr11"/>
</dbReference>
<dbReference type="eggNOG" id="KOG1912">
    <property type="taxonomic scope" value="Eukaryota"/>
</dbReference>
<dbReference type="InParanoid" id="Q8K1X1"/>
<dbReference type="OrthoDB" id="1291858at2759"/>
<dbReference type="PhylomeDB" id="Q8K1X1"/>
<dbReference type="Reactome" id="R-MMU-9013407">
    <property type="pathway name" value="RHOH GTPase cycle"/>
</dbReference>
<dbReference type="BioGRID-ORCS" id="207425">
    <property type="hits" value="4 hits in 79 CRISPR screens"/>
</dbReference>
<dbReference type="ChiTaRS" id="Wdr11">
    <property type="organism name" value="mouse"/>
</dbReference>
<dbReference type="PRO" id="PR:Q8K1X1"/>
<dbReference type="Proteomes" id="UP000000589">
    <property type="component" value="Unplaced"/>
</dbReference>
<dbReference type="RNAct" id="Q8K1X1">
    <property type="molecule type" value="protein"/>
</dbReference>
<dbReference type="GO" id="GO:0005930">
    <property type="term" value="C:axoneme"/>
    <property type="evidence" value="ECO:0000314"/>
    <property type="project" value="UniProtKB"/>
</dbReference>
<dbReference type="GO" id="GO:0036064">
    <property type="term" value="C:ciliary basal body"/>
    <property type="evidence" value="ECO:0000314"/>
    <property type="project" value="UniProtKB"/>
</dbReference>
<dbReference type="GO" id="GO:0005929">
    <property type="term" value="C:cilium"/>
    <property type="evidence" value="ECO:0000314"/>
    <property type="project" value="MGI"/>
</dbReference>
<dbReference type="GO" id="GO:0005737">
    <property type="term" value="C:cytoplasm"/>
    <property type="evidence" value="ECO:0000266"/>
    <property type="project" value="MGI"/>
</dbReference>
<dbReference type="GO" id="GO:0031410">
    <property type="term" value="C:cytoplasmic vesicle"/>
    <property type="evidence" value="ECO:0000250"/>
    <property type="project" value="UniProtKB"/>
</dbReference>
<dbReference type="GO" id="GO:0005634">
    <property type="term" value="C:nucleus"/>
    <property type="evidence" value="ECO:0000314"/>
    <property type="project" value="UniProtKB"/>
</dbReference>
<dbReference type="GO" id="GO:0005802">
    <property type="term" value="C:trans-Golgi network"/>
    <property type="evidence" value="ECO:0000250"/>
    <property type="project" value="UniProtKB"/>
</dbReference>
<dbReference type="GO" id="GO:0060271">
    <property type="term" value="P:cilium assembly"/>
    <property type="evidence" value="ECO:0000314"/>
    <property type="project" value="UniProtKB"/>
</dbReference>
<dbReference type="GO" id="GO:0060322">
    <property type="term" value="P:head development"/>
    <property type="evidence" value="ECO:0000315"/>
    <property type="project" value="UniProtKB"/>
</dbReference>
<dbReference type="GO" id="GO:0007507">
    <property type="term" value="P:heart development"/>
    <property type="evidence" value="ECO:0000315"/>
    <property type="project" value="UniProtKB"/>
</dbReference>
<dbReference type="GO" id="GO:0006886">
    <property type="term" value="P:intracellular protein transport"/>
    <property type="evidence" value="ECO:0000250"/>
    <property type="project" value="UniProtKB"/>
</dbReference>
<dbReference type="GO" id="GO:0035264">
    <property type="term" value="P:multicellular organism growth"/>
    <property type="evidence" value="ECO:0000315"/>
    <property type="project" value="UniProtKB"/>
</dbReference>
<dbReference type="GO" id="GO:0008589">
    <property type="term" value="P:regulation of smoothened signaling pathway"/>
    <property type="evidence" value="ECO:0000314"/>
    <property type="project" value="UniProtKB"/>
</dbReference>
<dbReference type="GO" id="GO:0099041">
    <property type="term" value="P:vesicle tethering to Golgi"/>
    <property type="evidence" value="ECO:0000250"/>
    <property type="project" value="UniProtKB"/>
</dbReference>
<dbReference type="FunFam" id="2.130.10.10:FF:000204">
    <property type="entry name" value="WD repeat domain 11"/>
    <property type="match status" value="1"/>
</dbReference>
<dbReference type="FunFam" id="2.130.10.10:FF:000309">
    <property type="entry name" value="WD repeat domain 11"/>
    <property type="match status" value="1"/>
</dbReference>
<dbReference type="FunFam" id="2.130.10.10:FF:000210">
    <property type="entry name" value="WD repeat-containing protein 11 isoform X1"/>
    <property type="match status" value="1"/>
</dbReference>
<dbReference type="Gene3D" id="2.130.10.10">
    <property type="entry name" value="YVTN repeat-like/Quinoprotein amine dehydrogenase"/>
    <property type="match status" value="3"/>
</dbReference>
<dbReference type="InterPro" id="IPR015943">
    <property type="entry name" value="WD40/YVTN_repeat-like_dom_sf"/>
</dbReference>
<dbReference type="InterPro" id="IPR019775">
    <property type="entry name" value="WD40_repeat_CS"/>
</dbReference>
<dbReference type="InterPro" id="IPR036322">
    <property type="entry name" value="WD40_repeat_dom_sf"/>
</dbReference>
<dbReference type="InterPro" id="IPR001680">
    <property type="entry name" value="WD40_rpt"/>
</dbReference>
<dbReference type="InterPro" id="IPR039694">
    <property type="entry name" value="WDR11"/>
</dbReference>
<dbReference type="PANTHER" id="PTHR14593">
    <property type="entry name" value="WD REPEAT-CONTAINING PROTEIN 11"/>
    <property type="match status" value="1"/>
</dbReference>
<dbReference type="PANTHER" id="PTHR14593:SF5">
    <property type="entry name" value="WD REPEAT-CONTAINING PROTEIN 11"/>
    <property type="match status" value="1"/>
</dbReference>
<dbReference type="Pfam" id="PF23751">
    <property type="entry name" value="Beta-prop_WDR11_1st"/>
    <property type="match status" value="1"/>
</dbReference>
<dbReference type="Pfam" id="PF23752">
    <property type="entry name" value="Beta-prop_WDR11_2nd"/>
    <property type="match status" value="1"/>
</dbReference>
<dbReference type="Pfam" id="PF23753">
    <property type="entry name" value="TPR_WDR11"/>
    <property type="match status" value="1"/>
</dbReference>
<dbReference type="SMART" id="SM00320">
    <property type="entry name" value="WD40"/>
    <property type="match status" value="6"/>
</dbReference>
<dbReference type="SUPFAM" id="SSF101908">
    <property type="entry name" value="Putative isomerase YbhE"/>
    <property type="match status" value="1"/>
</dbReference>
<dbReference type="SUPFAM" id="SSF50978">
    <property type="entry name" value="WD40 repeat-like"/>
    <property type="match status" value="1"/>
</dbReference>
<dbReference type="PROSITE" id="PS00678">
    <property type="entry name" value="WD_REPEATS_1"/>
    <property type="match status" value="2"/>
</dbReference>
<protein>
    <recommendedName>
        <fullName>WD repeat-containing protein 11</fullName>
    </recommendedName>
    <alternativeName>
        <fullName>Bromodomain and WD repeat-containing protein 2</fullName>
    </alternativeName>
</protein>
<evidence type="ECO:0000250" key="1">
    <source>
        <dbReference type="UniProtKB" id="Q9BZH6"/>
    </source>
</evidence>
<evidence type="ECO:0000269" key="2">
    <source>
    </source>
</evidence>
<evidence type="ECO:0000269" key="3">
    <source>
    </source>
</evidence>
<evidence type="ECO:0000269" key="4">
    <source>
    </source>
</evidence>
<evidence type="ECO:0000305" key="5"/>
<evidence type="ECO:0007744" key="6">
    <source>
    </source>
</evidence>